<accession>Q95JW3</accession>
<accession>Q4R3Y6</accession>
<dbReference type="EMBL" id="AB070065">
    <property type="protein sequence ID" value="BAB63010.1"/>
    <property type="molecule type" value="mRNA"/>
</dbReference>
<dbReference type="EMBL" id="AB179129">
    <property type="protein sequence ID" value="BAE02180.1"/>
    <property type="molecule type" value="mRNA"/>
</dbReference>
<dbReference type="SMR" id="Q95JW3"/>
<dbReference type="STRING" id="9541.ENSMFAP00000015077"/>
<dbReference type="eggNOG" id="ENOG502QW4D">
    <property type="taxonomic scope" value="Eukaryota"/>
</dbReference>
<dbReference type="Proteomes" id="UP000233100">
    <property type="component" value="Unplaced"/>
</dbReference>
<dbReference type="GO" id="GO:0035556">
    <property type="term" value="P:intracellular signal transduction"/>
    <property type="evidence" value="ECO:0007669"/>
    <property type="project" value="InterPro"/>
</dbReference>
<dbReference type="CDD" id="cd04446">
    <property type="entry name" value="DEP_DEPDC4"/>
    <property type="match status" value="1"/>
</dbReference>
<dbReference type="CDD" id="cd04405">
    <property type="entry name" value="RhoGAP_BRCC3-like"/>
    <property type="match status" value="1"/>
</dbReference>
<dbReference type="FunFam" id="1.10.10.10:FF:000326">
    <property type="entry name" value="DEP domain-containing protein 7"/>
    <property type="match status" value="1"/>
</dbReference>
<dbReference type="Gene3D" id="1.10.10.10">
    <property type="entry name" value="Winged helix-like DNA-binding domain superfamily/Winged helix DNA-binding domain"/>
    <property type="match status" value="1"/>
</dbReference>
<dbReference type="InterPro" id="IPR000591">
    <property type="entry name" value="DEP_dom"/>
</dbReference>
<dbReference type="InterPro" id="IPR036388">
    <property type="entry name" value="WH-like_DNA-bd_sf"/>
</dbReference>
<dbReference type="InterPro" id="IPR036390">
    <property type="entry name" value="WH_DNA-bd_sf"/>
</dbReference>
<dbReference type="PANTHER" id="PTHR16206">
    <property type="entry name" value="DEP DOMAIN-CONTAINING"/>
    <property type="match status" value="1"/>
</dbReference>
<dbReference type="PANTHER" id="PTHR16206:SF9">
    <property type="entry name" value="DEP DOMAIN-CONTAINING PROTEIN 7"/>
    <property type="match status" value="1"/>
</dbReference>
<dbReference type="Pfam" id="PF00610">
    <property type="entry name" value="DEP"/>
    <property type="match status" value="1"/>
</dbReference>
<dbReference type="SMART" id="SM00049">
    <property type="entry name" value="DEP"/>
    <property type="match status" value="1"/>
</dbReference>
<dbReference type="SUPFAM" id="SSF46785">
    <property type="entry name" value="Winged helix' DNA-binding domain"/>
    <property type="match status" value="1"/>
</dbReference>
<dbReference type="PROSITE" id="PS50186">
    <property type="entry name" value="DEP"/>
    <property type="match status" value="1"/>
</dbReference>
<sequence length="502" mass="57637">MRGLCEFYWQEFGIKGFSVAQKPFGATYVWSSIINTLQTQVEVKKRRHRLKRHNDCFVGSEAVDVIFSHLIQNKYFGDVDIPRAKVVRVCQALMDYKVFEAIPTKVFGKDKKPTFEDSSCSLYRFTTIPNQDSQLGKENKLCSPSRYADALFKSSDIKSASLEDLWENLSLKPANSPHVNISATLSPQVINEVWQEETIGRLLQLVDLPLLDSLLKQQEAVPKVPQSKRQSDMVNSSNYLDRGILKAYSDSQEDEWLSAAIDCLEYLPDQMVVEISRSFPEQPDRTDLVKELLFDAIGRYYSSREPLLNHLSDVHNGIAELLVNGKTEIALEATQLLLKLLDFQNREEFRRLLYFMAVAANPSEFKLQKESDNRMVVKRIFSKAIVDNKNLSKGKTDLLVLFLMDHQKDVFKIPGTLHKIVSVKLMAIQNGRDPNRDAGYIYCQRIDQRDYSNNTQKTTKDELLNLLKTIDEDSKLSAKEKKKLLGQFYKCHPDIFIEHFGD</sequence>
<feature type="chain" id="PRO_0000307738" description="DEP domain-containing protein 7">
    <location>
        <begin position="1"/>
        <end position="502"/>
    </location>
</feature>
<feature type="domain" description="DEP" evidence="1">
    <location>
        <begin position="37"/>
        <end position="127"/>
    </location>
</feature>
<feature type="splice variant" id="VSP_028812" description="In isoform 2." evidence="2">
    <location>
        <begin position="1"/>
        <end position="270"/>
    </location>
</feature>
<feature type="splice variant" id="VSP_028813" description="In isoform 2." evidence="2">
    <original>YIYCQRIDQRDYSNNTQKTTKDELLNLLKTIDEDSKLSAKEKKKLLGQFYKCHPDIFIEHFGD</original>
    <variation>NLRNIVFMIFQRQISGVF</variation>
    <location>
        <begin position="440"/>
        <end position="502"/>
    </location>
</feature>
<evidence type="ECO:0000255" key="1">
    <source>
        <dbReference type="PROSITE-ProRule" id="PRU00066"/>
    </source>
</evidence>
<evidence type="ECO:0000303" key="2">
    <source>
    </source>
</evidence>
<evidence type="ECO:0000305" key="3"/>
<organism>
    <name type="scientific">Macaca fascicularis</name>
    <name type="common">Crab-eating macaque</name>
    <name type="synonym">Cynomolgus monkey</name>
    <dbReference type="NCBI Taxonomy" id="9541"/>
    <lineage>
        <taxon>Eukaryota</taxon>
        <taxon>Metazoa</taxon>
        <taxon>Chordata</taxon>
        <taxon>Craniata</taxon>
        <taxon>Vertebrata</taxon>
        <taxon>Euteleostomi</taxon>
        <taxon>Mammalia</taxon>
        <taxon>Eutheria</taxon>
        <taxon>Euarchontoglires</taxon>
        <taxon>Primates</taxon>
        <taxon>Haplorrhini</taxon>
        <taxon>Catarrhini</taxon>
        <taxon>Cercopithecidae</taxon>
        <taxon>Cercopithecinae</taxon>
        <taxon>Macaca</taxon>
    </lineage>
</organism>
<proteinExistence type="evidence at transcript level"/>
<comment type="alternative products">
    <event type="alternative splicing"/>
    <isoform>
        <id>Q95JW3-1</id>
        <name>1</name>
        <sequence type="displayed"/>
    </isoform>
    <isoform>
        <id>Q95JW3-2</id>
        <name>2</name>
        <sequence type="described" ref="VSP_028812 VSP_028813"/>
    </isoform>
</comment>
<comment type="similarity">
    <text evidence="3">Belongs to the DEPDC7 family.</text>
</comment>
<reference key="1">
    <citation type="journal article" date="2002" name="BMC Genomics">
        <title>Cynomolgus monkey testicular cDNAs for discovery of novel human genes in the human genome sequence.</title>
        <authorList>
            <person name="Osada N."/>
            <person name="Hida M."/>
            <person name="Kusuda J."/>
            <person name="Tanuma R."/>
            <person name="Hirata M."/>
            <person name="Suto Y."/>
            <person name="Hirai M."/>
            <person name="Terao K."/>
            <person name="Sugano S."/>
            <person name="Hashimoto K."/>
        </authorList>
    </citation>
    <scope>NUCLEOTIDE SEQUENCE [LARGE SCALE MRNA] (ISOFORMS 1 AND 2)</scope>
    <source>
        <tissue>Testis</tissue>
    </source>
</reference>
<protein>
    <recommendedName>
        <fullName>DEP domain-containing protein 7</fullName>
    </recommendedName>
</protein>
<gene>
    <name type="primary">DEPDC7</name>
    <name type="ORF">QtsA-10154</name>
    <name type="ORF">QtsA-13250</name>
</gene>
<keyword id="KW-0025">Alternative splicing</keyword>
<keyword id="KW-1185">Reference proteome</keyword>
<name>DEPD7_MACFA</name>